<dbReference type="EMBL" id="X12927">
    <property type="protein sequence ID" value="CAA31394.1"/>
    <property type="molecule type" value="Genomic_DNA"/>
</dbReference>
<dbReference type="EMBL" id="Z73129">
    <property type="protein sequence ID" value="CAA97472.1"/>
    <property type="molecule type" value="Genomic_DNA"/>
</dbReference>
<dbReference type="EMBL" id="X97560">
    <property type="protein sequence ID" value="CAA66167.1"/>
    <property type="molecule type" value="Genomic_DNA"/>
</dbReference>
<dbReference type="EMBL" id="BK006945">
    <property type="protein sequence ID" value="DAA09296.1"/>
    <property type="molecule type" value="Genomic_DNA"/>
</dbReference>
<dbReference type="PIR" id="S20139">
    <property type="entry name" value="S20139"/>
</dbReference>
<dbReference type="RefSeq" id="NP_013076.1">
    <property type="nucleotide sequence ID" value="NM_001181844.1"/>
</dbReference>
<dbReference type="SMR" id="P10592"/>
<dbReference type="BioGRID" id="31229">
    <property type="interactions" value="582"/>
</dbReference>
<dbReference type="ComplexPortal" id="CPX-1276">
    <property type="entry name" value="HMC complex"/>
</dbReference>
<dbReference type="ComplexPortal" id="CPX-1883">
    <property type="entry name" value="HAP1 transcriptional repressor complex, SSA2 variant"/>
</dbReference>
<dbReference type="DIP" id="DIP-2265N"/>
<dbReference type="FunCoup" id="P10592">
    <property type="interactions" value="2416"/>
</dbReference>
<dbReference type="IntAct" id="P10592">
    <property type="interactions" value="1007"/>
</dbReference>
<dbReference type="MINT" id="P10592"/>
<dbReference type="STRING" id="4932.YLL024C"/>
<dbReference type="CarbonylDB" id="P10592"/>
<dbReference type="GlyGen" id="P10592">
    <property type="glycosylation" value="1 site"/>
</dbReference>
<dbReference type="iPTMnet" id="P10592"/>
<dbReference type="PaxDb" id="4932-YLL024C"/>
<dbReference type="PeptideAtlas" id="P10592"/>
<dbReference type="EnsemblFungi" id="YLL024C_mRNA">
    <property type="protein sequence ID" value="YLL024C"/>
    <property type="gene ID" value="YLL024C"/>
</dbReference>
<dbReference type="GeneID" id="850636"/>
<dbReference type="KEGG" id="sce:YLL024C"/>
<dbReference type="AGR" id="SGD:S000003947"/>
<dbReference type="SGD" id="S000003947">
    <property type="gene designation" value="SSA2"/>
</dbReference>
<dbReference type="VEuPathDB" id="FungiDB:YLL024C"/>
<dbReference type="eggNOG" id="KOG0101">
    <property type="taxonomic scope" value="Eukaryota"/>
</dbReference>
<dbReference type="GeneTree" id="ENSGT00940000176322"/>
<dbReference type="HOGENOM" id="CLU_005965_7_0_1"/>
<dbReference type="InParanoid" id="P10592"/>
<dbReference type="OMA" id="CNPIMTR"/>
<dbReference type="OrthoDB" id="2401965at2759"/>
<dbReference type="BioCyc" id="YEAST:G3O-32128-MONOMER"/>
<dbReference type="Reactome" id="R-SCE-3371453">
    <property type="pathway name" value="Regulation of HSF1-mediated heat shock response"/>
</dbReference>
<dbReference type="Reactome" id="R-SCE-3371497">
    <property type="pathway name" value="HSP90 chaperone cycle for steroid hormone receptors (SHR) in the presence of ligand"/>
</dbReference>
<dbReference type="Reactome" id="R-SCE-3371571">
    <property type="pathway name" value="HSF1-dependent transactivation"/>
</dbReference>
<dbReference type="Reactome" id="R-SCE-6798695">
    <property type="pathway name" value="Neutrophil degranulation"/>
</dbReference>
<dbReference type="Reactome" id="R-SCE-8876725">
    <property type="pathway name" value="Protein methylation"/>
</dbReference>
<dbReference type="Reactome" id="R-SCE-9841251">
    <property type="pathway name" value="Mitochondrial unfolded protein response (UPRmt)"/>
</dbReference>
<dbReference type="BioGRID-ORCS" id="850636">
    <property type="hits" value="0 hits in 10 CRISPR screens"/>
</dbReference>
<dbReference type="CD-CODE" id="67785C55">
    <property type="entry name" value="Hypersomatic shock foci"/>
</dbReference>
<dbReference type="CD-CODE" id="E03F929F">
    <property type="entry name" value="Stress granule"/>
</dbReference>
<dbReference type="PRO" id="PR:P10592"/>
<dbReference type="Proteomes" id="UP000002311">
    <property type="component" value="Chromosome XII"/>
</dbReference>
<dbReference type="RNAct" id="P10592">
    <property type="molecule type" value="protein"/>
</dbReference>
<dbReference type="GO" id="GO:0005737">
    <property type="term" value="C:cytoplasm"/>
    <property type="evidence" value="ECO:0000314"/>
    <property type="project" value="SGD"/>
</dbReference>
<dbReference type="GO" id="GO:0005829">
    <property type="term" value="C:cytosol"/>
    <property type="evidence" value="ECO:0000314"/>
    <property type="project" value="SGD"/>
</dbReference>
<dbReference type="GO" id="GO:1903561">
    <property type="term" value="C:extracellular vesicle"/>
    <property type="evidence" value="ECO:0000314"/>
    <property type="project" value="SGD"/>
</dbReference>
<dbReference type="GO" id="GO:0009277">
    <property type="term" value="C:fungal-type cell wall"/>
    <property type="evidence" value="ECO:0000314"/>
    <property type="project" value="SGD"/>
</dbReference>
<dbReference type="GO" id="GO:0000329">
    <property type="term" value="C:fungal-type vacuole membrane"/>
    <property type="evidence" value="ECO:0000314"/>
    <property type="project" value="SGD"/>
</dbReference>
<dbReference type="GO" id="GO:0005739">
    <property type="term" value="C:mitochondrion"/>
    <property type="evidence" value="ECO:0000314"/>
    <property type="project" value="SGD"/>
</dbReference>
<dbReference type="GO" id="GO:0005634">
    <property type="term" value="C:nucleus"/>
    <property type="evidence" value="ECO:0000318"/>
    <property type="project" value="GO_Central"/>
</dbReference>
<dbReference type="GO" id="GO:0005886">
    <property type="term" value="C:plasma membrane"/>
    <property type="evidence" value="ECO:0007005"/>
    <property type="project" value="SGD"/>
</dbReference>
<dbReference type="GO" id="GO:0017053">
    <property type="term" value="C:transcription repressor complex"/>
    <property type="evidence" value="ECO:0000303"/>
    <property type="project" value="ComplexPortal"/>
</dbReference>
<dbReference type="GO" id="GO:0005524">
    <property type="term" value="F:ATP binding"/>
    <property type="evidence" value="ECO:0000314"/>
    <property type="project" value="SGD"/>
</dbReference>
<dbReference type="GO" id="GO:0016887">
    <property type="term" value="F:ATP hydrolysis activity"/>
    <property type="evidence" value="ECO:0000250"/>
    <property type="project" value="SGD"/>
</dbReference>
<dbReference type="GO" id="GO:0140662">
    <property type="term" value="F:ATP-dependent protein folding chaperone"/>
    <property type="evidence" value="ECO:0007669"/>
    <property type="project" value="InterPro"/>
</dbReference>
<dbReference type="GO" id="GO:0031072">
    <property type="term" value="F:heat shock protein binding"/>
    <property type="evidence" value="ECO:0000318"/>
    <property type="project" value="GO_Central"/>
</dbReference>
<dbReference type="GO" id="GO:0044183">
    <property type="term" value="F:protein folding chaperone"/>
    <property type="evidence" value="ECO:0000318"/>
    <property type="project" value="GO_Central"/>
</dbReference>
<dbReference type="GO" id="GO:0000049">
    <property type="term" value="F:tRNA binding"/>
    <property type="evidence" value="ECO:0000314"/>
    <property type="project" value="SGD"/>
</dbReference>
<dbReference type="GO" id="GO:0051082">
    <property type="term" value="F:unfolded protein binding"/>
    <property type="evidence" value="ECO:0000316"/>
    <property type="project" value="SGD"/>
</dbReference>
<dbReference type="GO" id="GO:0009267">
    <property type="term" value="P:cellular response to starvation"/>
    <property type="evidence" value="ECO:0000315"/>
    <property type="project" value="SGD"/>
</dbReference>
<dbReference type="GO" id="GO:0051085">
    <property type="term" value="P:chaperone cofactor-dependent protein refolding"/>
    <property type="evidence" value="ECO:0000318"/>
    <property type="project" value="GO_Central"/>
</dbReference>
<dbReference type="GO" id="GO:0045892">
    <property type="term" value="P:negative regulation of DNA-templated transcription"/>
    <property type="evidence" value="ECO:0000303"/>
    <property type="project" value="ComplexPortal"/>
</dbReference>
<dbReference type="GO" id="GO:0043161">
    <property type="term" value="P:proteasome-mediated ubiquitin-dependent protein catabolic process"/>
    <property type="evidence" value="ECO:0000316"/>
    <property type="project" value="SGD"/>
</dbReference>
<dbReference type="GO" id="GO:0006457">
    <property type="term" value="P:protein folding"/>
    <property type="evidence" value="ECO:0000314"/>
    <property type="project" value="SGD"/>
</dbReference>
<dbReference type="GO" id="GO:0042026">
    <property type="term" value="P:protein refolding"/>
    <property type="evidence" value="ECO:0000318"/>
    <property type="project" value="GO_Central"/>
</dbReference>
<dbReference type="GO" id="GO:0070482">
    <property type="term" value="P:response to oxygen levels"/>
    <property type="evidence" value="ECO:0000303"/>
    <property type="project" value="ComplexPortal"/>
</dbReference>
<dbReference type="GO" id="GO:0006616">
    <property type="term" value="P:SRP-dependent cotranslational protein targeting to membrane, translocation"/>
    <property type="evidence" value="ECO:0000315"/>
    <property type="project" value="SGD"/>
</dbReference>
<dbReference type="GO" id="GO:0035719">
    <property type="term" value="P:tRNA import into nucleus"/>
    <property type="evidence" value="ECO:0000315"/>
    <property type="project" value="SGD"/>
</dbReference>
<dbReference type="CDD" id="cd10233">
    <property type="entry name" value="ASKHA_NBD_HSP70_HSPA1"/>
    <property type="match status" value="1"/>
</dbReference>
<dbReference type="FunFam" id="2.60.34.10:FF:000002">
    <property type="entry name" value="Heat shock 70 kDa"/>
    <property type="match status" value="1"/>
</dbReference>
<dbReference type="FunFam" id="3.90.640.10:FF:000002">
    <property type="entry name" value="Heat shock 70 kDa"/>
    <property type="match status" value="1"/>
</dbReference>
<dbReference type="FunFam" id="3.30.30.30:FF:000001">
    <property type="entry name" value="heat shock 70 kDa protein-like"/>
    <property type="match status" value="1"/>
</dbReference>
<dbReference type="FunFam" id="3.30.420.40:FF:000135">
    <property type="entry name" value="Heat shock cognate 71 kDa protein"/>
    <property type="match status" value="1"/>
</dbReference>
<dbReference type="FunFam" id="1.20.1270.10:FF:000016">
    <property type="entry name" value="Heat shock protein 70"/>
    <property type="match status" value="1"/>
</dbReference>
<dbReference type="FunFam" id="3.30.420.40:FF:000026">
    <property type="entry name" value="Heat shock protein 70"/>
    <property type="match status" value="1"/>
</dbReference>
<dbReference type="Gene3D" id="1.20.1270.10">
    <property type="match status" value="1"/>
</dbReference>
<dbReference type="Gene3D" id="3.30.30.30">
    <property type="match status" value="1"/>
</dbReference>
<dbReference type="Gene3D" id="3.30.420.40">
    <property type="match status" value="2"/>
</dbReference>
<dbReference type="Gene3D" id="3.90.640.10">
    <property type="entry name" value="Actin, Chain A, domain 4"/>
    <property type="match status" value="1"/>
</dbReference>
<dbReference type="Gene3D" id="2.60.34.10">
    <property type="entry name" value="Substrate Binding Domain Of DNAk, Chain A, domain 1"/>
    <property type="match status" value="1"/>
</dbReference>
<dbReference type="InterPro" id="IPR043129">
    <property type="entry name" value="ATPase_NBD"/>
</dbReference>
<dbReference type="InterPro" id="IPR018181">
    <property type="entry name" value="Heat_shock_70_CS"/>
</dbReference>
<dbReference type="InterPro" id="IPR029048">
    <property type="entry name" value="HSP70_C_sf"/>
</dbReference>
<dbReference type="InterPro" id="IPR029047">
    <property type="entry name" value="HSP70_peptide-bd_sf"/>
</dbReference>
<dbReference type="InterPro" id="IPR013126">
    <property type="entry name" value="Hsp_70_fam"/>
</dbReference>
<dbReference type="NCBIfam" id="NF001413">
    <property type="entry name" value="PRK00290.1"/>
    <property type="match status" value="1"/>
</dbReference>
<dbReference type="PANTHER" id="PTHR19375">
    <property type="entry name" value="HEAT SHOCK PROTEIN 70KDA"/>
    <property type="match status" value="1"/>
</dbReference>
<dbReference type="Pfam" id="PF00012">
    <property type="entry name" value="HSP70"/>
    <property type="match status" value="1"/>
</dbReference>
<dbReference type="PRINTS" id="PR00301">
    <property type="entry name" value="HEATSHOCK70"/>
</dbReference>
<dbReference type="SUPFAM" id="SSF53067">
    <property type="entry name" value="Actin-like ATPase domain"/>
    <property type="match status" value="2"/>
</dbReference>
<dbReference type="SUPFAM" id="SSF100934">
    <property type="entry name" value="Heat shock protein 70kD (HSP70), C-terminal subdomain"/>
    <property type="match status" value="1"/>
</dbReference>
<dbReference type="SUPFAM" id="SSF100920">
    <property type="entry name" value="Heat shock protein 70kD (HSP70), peptide-binding domain"/>
    <property type="match status" value="1"/>
</dbReference>
<dbReference type="PROSITE" id="PS00297">
    <property type="entry name" value="HSP70_1"/>
    <property type="match status" value="1"/>
</dbReference>
<dbReference type="PROSITE" id="PS00329">
    <property type="entry name" value="HSP70_2"/>
    <property type="match status" value="1"/>
</dbReference>
<dbReference type="PROSITE" id="PS01036">
    <property type="entry name" value="HSP70_3"/>
    <property type="match status" value="1"/>
</dbReference>
<gene>
    <name type="primary">SSA2</name>
    <name type="ordered locus">YLL024C</name>
    <name type="ORF">L0931</name>
</gene>
<feature type="initiator methionine" description="Removed" evidence="6 10">
    <location>
        <position position="1"/>
    </location>
</feature>
<feature type="chain" id="PRO_0000078386" description="Heat shock protein SSA2">
    <location>
        <begin position="2"/>
        <end position="639"/>
    </location>
</feature>
<feature type="region of interest" description="Disordered" evidence="2">
    <location>
        <begin position="605"/>
        <end position="639"/>
    </location>
</feature>
<feature type="modified residue" description="N-acetylserine" evidence="6 10">
    <location>
        <position position="2"/>
    </location>
</feature>
<feature type="modified residue" description="Phosphoserine" evidence="8">
    <location>
        <position position="20"/>
    </location>
</feature>
<feature type="modified residue" description="Phosphoserine" evidence="1">
    <location>
        <position position="551"/>
    </location>
</feature>
<feature type="modified residue" description="Phosphoserine" evidence="1">
    <location>
        <position position="603"/>
    </location>
</feature>
<feature type="cross-link" description="Glycyl lysine isopeptide (Lys-Gly) (interchain with G-Cter in ubiquitin)" evidence="9">
    <location>
        <position position="556"/>
    </location>
</feature>
<reference key="1">
    <citation type="journal article" date="1989" name="Nucleic Acids Res.">
        <title>The SSA1 and SSA2 genes of the yeast Saccharomyces cerevisiae.</title>
        <authorList>
            <person name="Slater M.R."/>
            <person name="Craig E.A."/>
        </authorList>
    </citation>
    <scope>NUCLEOTIDE SEQUENCE [GENOMIC DNA]</scope>
    <source>
        <strain>ATCC 204508 / S288c</strain>
    </source>
</reference>
<reference key="2">
    <citation type="journal article" date="1997" name="Yeast">
        <title>The sequence of 32kb on the left arm of yeast chromosome XII reveals six known genes, a new member of the seripauperins family and a new ABC transporter homologous to the human multidrug resistance protein.</title>
        <authorList>
            <person name="Purnelle B."/>
            <person name="Goffeau A."/>
        </authorList>
    </citation>
    <scope>NUCLEOTIDE SEQUENCE [LARGE SCALE GENOMIC DNA]</scope>
    <source>
        <strain>ATCC 204508 / S288c</strain>
    </source>
</reference>
<reference key="3">
    <citation type="journal article" date="2014" name="G3 (Bethesda)">
        <title>The reference genome sequence of Saccharomyces cerevisiae: Then and now.</title>
        <authorList>
            <person name="Engel S.R."/>
            <person name="Dietrich F.S."/>
            <person name="Fisk D.G."/>
            <person name="Binkley G."/>
            <person name="Balakrishnan R."/>
            <person name="Costanzo M.C."/>
            <person name="Dwight S.S."/>
            <person name="Hitz B.C."/>
            <person name="Karra K."/>
            <person name="Nash R.S."/>
            <person name="Weng S."/>
            <person name="Wong E.D."/>
            <person name="Lloyd P."/>
            <person name="Skrzypek M.S."/>
            <person name="Miyasato S.R."/>
            <person name="Simison M."/>
            <person name="Cherry J.M."/>
        </authorList>
    </citation>
    <scope>GENOME REANNOTATION</scope>
    <source>
        <strain>ATCC 204508 / S288c</strain>
    </source>
</reference>
<reference key="4">
    <citation type="journal article" date="1997" name="Nature">
        <title>The nucleotide sequence of Saccharomyces cerevisiae chromosome XII.</title>
        <authorList>
            <person name="Johnston M."/>
            <person name="Hillier L.W."/>
            <person name="Riles L."/>
            <person name="Albermann K."/>
            <person name="Andre B."/>
            <person name="Ansorge W."/>
            <person name="Benes V."/>
            <person name="Brueckner M."/>
            <person name="Delius H."/>
            <person name="Dubois E."/>
            <person name="Duesterhoeft A."/>
            <person name="Entian K.-D."/>
            <person name="Floeth M."/>
            <person name="Goffeau A."/>
            <person name="Hebling U."/>
            <person name="Heumann K."/>
            <person name="Heuss-Neitzel D."/>
            <person name="Hilbert H."/>
            <person name="Hilger F."/>
            <person name="Kleine K."/>
            <person name="Koetter P."/>
            <person name="Louis E.J."/>
            <person name="Messenguy F."/>
            <person name="Mewes H.-W."/>
            <person name="Miosga T."/>
            <person name="Moestl D."/>
            <person name="Mueller-Auer S."/>
            <person name="Nentwich U."/>
            <person name="Obermaier B."/>
            <person name="Piravandi E."/>
            <person name="Pohl T.M."/>
            <person name="Portetelle D."/>
            <person name="Purnelle B."/>
            <person name="Rechmann S."/>
            <person name="Rieger M."/>
            <person name="Rinke M."/>
            <person name="Rose M."/>
            <person name="Scharfe M."/>
            <person name="Scherens B."/>
            <person name="Scholler P."/>
            <person name="Schwager C."/>
            <person name="Schwarz S."/>
            <person name="Underwood A.P."/>
            <person name="Urrestarazu L.A."/>
            <person name="Vandenbol M."/>
            <person name="Verhasselt P."/>
            <person name="Vierendeels F."/>
            <person name="Voet M."/>
            <person name="Volckaert G."/>
            <person name="Voss H."/>
            <person name="Wambutt R."/>
            <person name="Wedler E."/>
            <person name="Wedler H."/>
            <person name="Zimmermann F.K."/>
            <person name="Zollner A."/>
            <person name="Hani J."/>
            <person name="Hoheisel J.D."/>
        </authorList>
    </citation>
    <scope>NUCLEOTIDE SEQUENCE [LARGE SCALE GENOMIC DNA]</scope>
    <source>
        <strain>ATCC 204508 / S288c</strain>
    </source>
</reference>
<reference key="5">
    <citation type="journal article" date="1994" name="Electrophoresis">
        <title>Protein identifications for a Saccharomyces cerevisiae protein database.</title>
        <authorList>
            <person name="Garrels J.I."/>
            <person name="Futcher B."/>
            <person name="Kobayashi R."/>
            <person name="Latter G.I."/>
            <person name="Schwender B."/>
            <person name="Volpe T."/>
            <person name="Warner J.R."/>
            <person name="McLaughlin C.S."/>
        </authorList>
    </citation>
    <scope>PROTEIN SEQUENCE OF 92-98 AND 326-342</scope>
    <source>
        <strain>ATCC 204508 / S288c</strain>
    </source>
</reference>
<reference key="6">
    <citation type="journal article" date="1996" name="FEMS Microbiol. Lett.">
        <title>Protein expression during exponential growth in 0.7 M NaCl medium of Saccharomyces cerevisiae.</title>
        <authorList>
            <person name="Norbeck J."/>
            <person name="Blomberg A."/>
        </authorList>
    </citation>
    <scope>PROTEIN SEQUENCE OF 187-196</scope>
    <source>
        <strain>ATCC 38531 / Y41</strain>
    </source>
</reference>
<reference key="7">
    <citation type="journal article" date="1997" name="Electrophoresis">
        <title>Proteome studies of Saccharomyces cerevisiae: identification and characterization of abundant proteins.</title>
        <authorList>
            <person name="Garrels J.I."/>
            <person name="McLaughlin C.S."/>
            <person name="Warner J.R."/>
            <person name="Futcher B."/>
            <person name="Latter G.I."/>
            <person name="Kobayashi R."/>
            <person name="Schwender B."/>
            <person name="Volpe T."/>
            <person name="Anderson D.S."/>
            <person name="Mesquita-Fuentes R."/>
            <person name="Payne W.E."/>
        </authorList>
    </citation>
    <scope>ACETYLATION AT SER-2</scope>
    <scope>PHOSPHORYLATION</scope>
</reference>
<reference key="8">
    <citation type="journal article" date="2003" name="J. Biol. Chem.">
        <title>Candida albicans Ssa1/2p is the cell envelope binding protein for human salivary histatin 5.</title>
        <authorList>
            <person name="Li X.S."/>
            <person name="Reddy M.S."/>
            <person name="Baev D."/>
            <person name="Edgerton M."/>
        </authorList>
    </citation>
    <scope>FUNCTION</scope>
    <scope>INTERACTION WITH HUMAN HTN3</scope>
</reference>
<reference key="9">
    <citation type="journal article" date="2003" name="Nature">
        <title>Global analysis of protein expression in yeast.</title>
        <authorList>
            <person name="Ghaemmaghami S."/>
            <person name="Huh W.-K."/>
            <person name="Bower K."/>
            <person name="Howson R.W."/>
            <person name="Belle A."/>
            <person name="Dephoure N."/>
            <person name="O'Shea E.K."/>
            <person name="Weissman J.S."/>
        </authorList>
    </citation>
    <scope>LEVEL OF PROTEIN EXPRESSION [LARGE SCALE ANALYSIS]</scope>
</reference>
<reference key="10">
    <citation type="journal article" date="2003" name="Nat. Biotechnol.">
        <title>A proteomics approach to understanding protein ubiquitination.</title>
        <authorList>
            <person name="Peng J."/>
            <person name="Schwartz D."/>
            <person name="Elias J.E."/>
            <person name="Thoreen C.C."/>
            <person name="Cheng D."/>
            <person name="Marsischky G."/>
            <person name="Roelofs J."/>
            <person name="Finley D."/>
            <person name="Gygi S.P."/>
        </authorList>
    </citation>
    <scope>UBIQUITINATION [LARGE SCALE ANALYSIS] AT LYS-556</scope>
    <scope>IDENTIFICATION BY MASS SPECTROMETRY</scope>
    <source>
        <strain>SUB592</strain>
    </source>
</reference>
<reference key="11">
    <citation type="journal article" date="2007" name="Proc. Natl. Acad. Sci. U.S.A.">
        <title>Analysis of phosphorylation sites on proteins from Saccharomyces cerevisiae by electron transfer dissociation (ETD) mass spectrometry.</title>
        <authorList>
            <person name="Chi A."/>
            <person name="Huttenhower C."/>
            <person name="Geer L.Y."/>
            <person name="Coon J.J."/>
            <person name="Syka J.E.P."/>
            <person name="Bai D.L."/>
            <person name="Shabanowitz J."/>
            <person name="Burke D.J."/>
            <person name="Troyanskaya O.G."/>
            <person name="Hunt D.F."/>
        </authorList>
    </citation>
    <scope>IDENTIFICATION BY MASS SPECTROMETRY [LARGE SCALE ANALYSIS]</scope>
</reference>
<reference key="12">
    <citation type="journal article" date="2008" name="Mol. Cell. Biol.">
        <title>Phosphorylation by casein kinase 2 regulates Nap1 localization and function.</title>
        <authorList>
            <person name="Calvert M.E.K."/>
            <person name="Keck K.M."/>
            <person name="Ptak C."/>
            <person name="Shabanowitz J."/>
            <person name="Hunt D.F."/>
            <person name="Pemberton L.F."/>
        </authorList>
    </citation>
    <scope>INTERACTION WITH NAP1</scope>
    <scope>IDENTIFICATION BY MASS SPECTROMETRY</scope>
</reference>
<reference key="13">
    <citation type="journal article" date="2008" name="Mol. Cell. Proteomics">
        <title>A multidimensional chromatography technology for in-depth phosphoproteome analysis.</title>
        <authorList>
            <person name="Albuquerque C.P."/>
            <person name="Smolka M.B."/>
            <person name="Payne S.H."/>
            <person name="Bafna V."/>
            <person name="Eng J."/>
            <person name="Zhou H."/>
        </authorList>
    </citation>
    <scope>PHOSPHORYLATION [LARGE SCALE ANALYSIS] AT SER-20</scope>
    <scope>IDENTIFICATION BY MASS SPECTROMETRY [LARGE SCALE ANALYSIS]</scope>
</reference>
<reference key="14">
    <citation type="journal article" date="2009" name="Science">
        <title>Global analysis of Cdk1 substrate phosphorylation sites provides insights into evolution.</title>
        <authorList>
            <person name="Holt L.J."/>
            <person name="Tuch B.B."/>
            <person name="Villen J."/>
            <person name="Johnson A.D."/>
            <person name="Gygi S.P."/>
            <person name="Morgan D.O."/>
        </authorList>
    </citation>
    <scope>IDENTIFICATION BY MASS SPECTROMETRY [LARGE SCALE ANALYSIS]</scope>
</reference>
<reference key="15">
    <citation type="journal article" date="2012" name="Proc. Natl. Acad. Sci. U.S.A.">
        <title>N-terminal acetylome analyses and functional insights of the N-terminal acetyltransferase NatB.</title>
        <authorList>
            <person name="Van Damme P."/>
            <person name="Lasa M."/>
            <person name="Polevoda B."/>
            <person name="Gazquez C."/>
            <person name="Elosegui-Artola A."/>
            <person name="Kim D.S."/>
            <person name="De Juan-Pardo E."/>
            <person name="Demeyer K."/>
            <person name="Hole K."/>
            <person name="Larrea E."/>
            <person name="Timmerman E."/>
            <person name="Prieto J."/>
            <person name="Arnesen T."/>
            <person name="Sherman F."/>
            <person name="Gevaert K."/>
            <person name="Aldabe R."/>
        </authorList>
    </citation>
    <scope>ACETYLATION [LARGE SCALE ANALYSIS] AT SER-2</scope>
    <scope>CLEAVAGE OF INITIATOR METHIONINE [LARGE SCALE ANALYSIS]</scope>
    <scope>IDENTIFICATION BY MASS SPECTROMETRY [LARGE SCALE ANALYSIS]</scope>
</reference>
<reference key="16">
    <citation type="journal article" date="2012" name="Proteomics">
        <title>Sites of ubiquitin attachment in Saccharomyces cerevisiae.</title>
        <authorList>
            <person name="Starita L.M."/>
            <person name="Lo R.S."/>
            <person name="Eng J.K."/>
            <person name="von Haller P.D."/>
            <person name="Fields S."/>
        </authorList>
    </citation>
    <scope>UBIQUITINATION [LARGE SCALE ANALYSIS] AT LYS-556</scope>
    <scope>IDENTIFICATION BY MASS SPECTROMETRY [LARGE SCALE ANALYSIS]</scope>
</reference>
<protein>
    <recommendedName>
        <fullName>Heat shock protein SSA2</fullName>
    </recommendedName>
</protein>
<evidence type="ECO:0000250" key="1">
    <source>
        <dbReference type="UniProtKB" id="P10591"/>
    </source>
</evidence>
<evidence type="ECO:0000256" key="2">
    <source>
        <dbReference type="SAM" id="MobiDB-lite"/>
    </source>
</evidence>
<evidence type="ECO:0000269" key="3">
    <source>
    </source>
</evidence>
<evidence type="ECO:0000269" key="4">
    <source>
    </source>
</evidence>
<evidence type="ECO:0000269" key="5">
    <source>
    </source>
</evidence>
<evidence type="ECO:0000269" key="6">
    <source>
    </source>
</evidence>
<evidence type="ECO:0000305" key="7"/>
<evidence type="ECO:0007744" key="8">
    <source>
    </source>
</evidence>
<evidence type="ECO:0007744" key="9">
    <source>
    </source>
</evidence>
<evidence type="ECO:0007744" key="10">
    <source>
    </source>
</evidence>
<sequence>MSKAVGIDLGTTYSCVAHFSNDRVDIIANDQGNRTTPSFVGFTDTERLIGDAAKNQAAMNPANTVFDAKRLIGRNFNDPEVQGDMKHFPFKLIDVDGKPQIQVEFKGETKNFTPEQISSMVLGKMKETAESYLGAKVNDAVVTVPAYFNDSQRQATKDAGTIAGLNVLRIINEPTAAAIAYGLDKKGKEEHVLIFDLGGGTFDVSLLSIEDGIFEVKATAGDTHLGGEDFDNRLVNHFIQEFKRKNKKDLSTNQRALRRLRTACERAKRTLSSSAQTSVEIDSLFEGIDFYTSITRARFEELCADLFRSTLDPVEKVLRDAKLDKSQVDEIVLVGGSTRIPKVQKLVTDYFNGKEPNRSINPDEAVAYGAAVQAAILTGDESSKTQDLLLLDVAPLSLGIETAGGVMTKLIPRNSTIPTKKSEVFSTYADNQPGVLIQVFEGERAKTKDNNLLGKFELSGIPPAPRGVPQIEVTFDVDSNGILNVSAVEKGTGKSNKITITNDKGRLSKEDIEKMVAEAEKFKEEDEKESQRIASKNQLESIAYSLKNTISEAGDKLEQADKDAVTKKAEETIAWLDSNTTATKEEFDDQLKELQEVANPIMSKLYQAGGAPEGAAPGGFPGGAPPAPEAEGPTVEEVD</sequence>
<organism>
    <name type="scientific">Saccharomyces cerevisiae (strain ATCC 204508 / S288c)</name>
    <name type="common">Baker's yeast</name>
    <dbReference type="NCBI Taxonomy" id="559292"/>
    <lineage>
        <taxon>Eukaryota</taxon>
        <taxon>Fungi</taxon>
        <taxon>Dikarya</taxon>
        <taxon>Ascomycota</taxon>
        <taxon>Saccharomycotina</taxon>
        <taxon>Saccharomycetes</taxon>
        <taxon>Saccharomycetales</taxon>
        <taxon>Saccharomycetaceae</taxon>
        <taxon>Saccharomyces</taxon>
    </lineage>
</organism>
<accession>P10592</accession>
<accession>D6VXY0</accession>
<keyword id="KW-0007">Acetylation</keyword>
<keyword id="KW-0067">ATP-binding</keyword>
<keyword id="KW-0134">Cell wall</keyword>
<keyword id="KW-0963">Cytoplasm</keyword>
<keyword id="KW-0903">Direct protein sequencing</keyword>
<keyword id="KW-1017">Isopeptide bond</keyword>
<keyword id="KW-0547">Nucleotide-binding</keyword>
<keyword id="KW-0597">Phosphoprotein</keyword>
<keyword id="KW-1185">Reference proteome</keyword>
<keyword id="KW-0964">Secreted</keyword>
<keyword id="KW-0346">Stress response</keyword>
<keyword id="KW-0832">Ubl conjugation</keyword>
<proteinExistence type="evidence at protein level"/>
<name>HSP72_YEAST</name>
<comment type="function">
    <text evidence="3">May play a role in the transport of polypeptides both across the mitochondrial membranes and into the endoplasmic reticulum. A functional difference between SSA1 and SSA2 proteins is expected. SSA2 can participate in the ATP-dependent disassembly of clathrin-coated vesicles.</text>
</comment>
<comment type="subunit">
    <text evidence="3 5">Binds human HTN3/histatin-5, a peptide from saliva, and mediates its fungicidal activity. Interacts with NAP1.</text>
</comment>
<comment type="interaction">
    <interactant intactId="EBI-8603">
        <id>P10592</id>
    </interactant>
    <interactant intactId="EBI-2612341">
        <id>P53940</id>
        <label>APJ1</label>
    </interactant>
    <organismsDiffer>false</organismsDiffer>
    <experiments>2</experiments>
</comment>
<comment type="interaction">
    <interactant intactId="EBI-8603">
        <id>P10592</id>
    </interactant>
    <interactant intactId="EBI-4912">
        <id>P18900</id>
        <label>COQ1</label>
    </interactant>
    <organismsDiffer>false</organismsDiffer>
    <experiments>2</experiments>
</comment>
<comment type="interaction">
    <interactant intactId="EBI-8603">
        <id>P10592</id>
    </interactant>
    <interactant intactId="EBI-6679">
        <id>P22696</id>
        <label>ESS1</label>
    </interactant>
    <organismsDiffer>false</organismsDiffer>
    <experiments>2</experiments>
</comment>
<comment type="interaction">
    <interactant intactId="EBI-8603">
        <id>P10592</id>
    </interactant>
    <interactant intactId="EBI-8659">
        <id>P02829</id>
        <label>HSP82</label>
    </interactant>
    <organismsDiffer>false</organismsDiffer>
    <experiments>3</experiments>
</comment>
<comment type="interaction">
    <interactant intactId="EBI-8603">
        <id>P10592</id>
    </interactant>
    <interactant intactId="EBI-9087">
        <id>P25605</id>
        <label>ILV6</label>
    </interactant>
    <organismsDiffer>false</organismsDiffer>
    <experiments>2</experiments>
</comment>
<comment type="interaction">
    <interactant intactId="EBI-8603">
        <id>P10592</id>
    </interactant>
    <interactant intactId="EBI-10594">
        <id>P17505</id>
        <label>MDH1</label>
    </interactant>
    <organismsDiffer>false</organismsDiffer>
    <experiments>2</experiments>
</comment>
<comment type="interaction">
    <interactant intactId="EBI-8603">
        <id>P10592</id>
    </interactant>
    <interactant intactId="EBI-14303">
        <id>P07275</id>
        <label>PUT2</label>
    </interactant>
    <organismsDiffer>false</organismsDiffer>
    <experiments>2</experiments>
</comment>
<comment type="interaction">
    <interactant intactId="EBI-8603">
        <id>P10592</id>
    </interactant>
    <interactant intactId="EBI-17244">
        <id>P25294</id>
        <label>SIS1</label>
    </interactant>
    <organismsDiffer>false</organismsDiffer>
    <experiments>3</experiments>
</comment>
<comment type="interaction">
    <interactant intactId="EBI-8603">
        <id>P10592</id>
    </interactant>
    <interactant intactId="EBI-35395">
        <id>Q06385</id>
        <label>VPS74</label>
    </interactant>
    <organismsDiffer>false</organismsDiffer>
    <experiments>2</experiments>
</comment>
<comment type="interaction">
    <interactant intactId="EBI-8603">
        <id>P10592</id>
    </interactant>
    <interactant intactId="EBI-20537">
        <id>P34761</id>
        <label>WHI3</label>
    </interactant>
    <organismsDiffer>false</organismsDiffer>
    <experiments>2</experiments>
</comment>
<comment type="interaction">
    <interactant intactId="EBI-8603">
        <id>P10592</id>
    </interactant>
    <interactant intactId="EBI-27486">
        <id>Q05016</id>
        <label>YMR226C</label>
    </interactant>
    <organismsDiffer>false</organismsDiffer>
    <experiments>2</experiments>
</comment>
<comment type="subcellular location">
    <subcellularLocation>
        <location>Cytoplasm</location>
    </subcellularLocation>
    <subcellularLocation>
        <location>Secreted</location>
        <location>Cell wall</location>
    </subcellularLocation>
</comment>
<comment type="miscellaneous">
    <text evidence="4">Present with 364000 molecules/cell in log phase SD medium.</text>
</comment>
<comment type="similarity">
    <text evidence="7">Belongs to the heat shock protein 70 family.</text>
</comment>